<evidence type="ECO:0000255" key="1">
    <source>
        <dbReference type="HAMAP-Rule" id="MF_00504"/>
    </source>
</evidence>
<keyword id="KW-0031">Aminopeptidase</keyword>
<keyword id="KW-0963">Cytoplasm</keyword>
<keyword id="KW-0378">Hydrolase</keyword>
<keyword id="KW-0464">Manganese</keyword>
<keyword id="KW-0479">Metal-binding</keyword>
<keyword id="KW-0645">Protease</keyword>
<name>PEPB_SALTI</name>
<organism>
    <name type="scientific">Salmonella typhi</name>
    <dbReference type="NCBI Taxonomy" id="90370"/>
    <lineage>
        <taxon>Bacteria</taxon>
        <taxon>Pseudomonadati</taxon>
        <taxon>Pseudomonadota</taxon>
        <taxon>Gammaproteobacteria</taxon>
        <taxon>Enterobacterales</taxon>
        <taxon>Enterobacteriaceae</taxon>
        <taxon>Salmonella</taxon>
    </lineage>
</organism>
<comment type="function">
    <text evidence="1">Probably plays an important role in intracellular peptide degradation.</text>
</comment>
<comment type="catalytic activity">
    <reaction evidence="1">
        <text>Release of an N-terminal amino acid, Xaa, from a peptide or arylamide. Xaa is preferably Glu or Asp but may be other amino acids, including Leu, Met, His, Cys and Gln.</text>
        <dbReference type="EC" id="3.4.11.23"/>
    </reaction>
</comment>
<comment type="cofactor">
    <cofactor evidence="1">
        <name>Mn(2+)</name>
        <dbReference type="ChEBI" id="CHEBI:29035"/>
    </cofactor>
    <text evidence="1">Binds 2 manganese ions per subunit.</text>
</comment>
<comment type="subunit">
    <text evidence="1">Homohexamer.</text>
</comment>
<comment type="subcellular location">
    <subcellularLocation>
        <location evidence="1">Cytoplasm</location>
    </subcellularLocation>
</comment>
<comment type="similarity">
    <text evidence="1">Belongs to the peptidase M17 family.</text>
</comment>
<dbReference type="EC" id="3.4.11.23" evidence="1"/>
<dbReference type="EMBL" id="AL513382">
    <property type="protein sequence ID" value="CAD02739.1"/>
    <property type="molecule type" value="Genomic_DNA"/>
</dbReference>
<dbReference type="EMBL" id="AE014613">
    <property type="protein sequence ID" value="AAO68044.1"/>
    <property type="molecule type" value="Genomic_DNA"/>
</dbReference>
<dbReference type="RefSeq" id="NP_457067.1">
    <property type="nucleotide sequence ID" value="NC_003198.1"/>
</dbReference>
<dbReference type="RefSeq" id="WP_000133543.1">
    <property type="nucleotide sequence ID" value="NZ_WSUR01000007.1"/>
</dbReference>
<dbReference type="SMR" id="Q8Z4N3"/>
<dbReference type="STRING" id="220341.gene:17586673"/>
<dbReference type="MEROPS" id="M17.004"/>
<dbReference type="KEGG" id="stt:t0320"/>
<dbReference type="KEGG" id="sty:STY2782"/>
<dbReference type="PATRIC" id="fig|220341.7.peg.2827"/>
<dbReference type="eggNOG" id="COG0260">
    <property type="taxonomic scope" value="Bacteria"/>
</dbReference>
<dbReference type="HOGENOM" id="CLU_013734_7_1_6"/>
<dbReference type="OMA" id="FYQGFYT"/>
<dbReference type="OrthoDB" id="9809354at2"/>
<dbReference type="Proteomes" id="UP000000541">
    <property type="component" value="Chromosome"/>
</dbReference>
<dbReference type="Proteomes" id="UP000002670">
    <property type="component" value="Chromosome"/>
</dbReference>
<dbReference type="GO" id="GO:0005737">
    <property type="term" value="C:cytoplasm"/>
    <property type="evidence" value="ECO:0007669"/>
    <property type="project" value="UniProtKB-SubCell"/>
</dbReference>
<dbReference type="GO" id="GO:0030145">
    <property type="term" value="F:manganese ion binding"/>
    <property type="evidence" value="ECO:0007669"/>
    <property type="project" value="UniProtKB-UniRule"/>
</dbReference>
<dbReference type="GO" id="GO:0070006">
    <property type="term" value="F:metalloaminopeptidase activity"/>
    <property type="evidence" value="ECO:0007669"/>
    <property type="project" value="InterPro"/>
</dbReference>
<dbReference type="GO" id="GO:0006508">
    <property type="term" value="P:proteolysis"/>
    <property type="evidence" value="ECO:0007669"/>
    <property type="project" value="UniProtKB-UniRule"/>
</dbReference>
<dbReference type="CDD" id="cd00433">
    <property type="entry name" value="Peptidase_M17"/>
    <property type="match status" value="1"/>
</dbReference>
<dbReference type="FunFam" id="3.40.630.10:FF:000037">
    <property type="entry name" value="Peptidase B"/>
    <property type="match status" value="1"/>
</dbReference>
<dbReference type="Gene3D" id="3.40.630.10">
    <property type="entry name" value="Zn peptidases"/>
    <property type="match status" value="1"/>
</dbReference>
<dbReference type="HAMAP" id="MF_00504">
    <property type="entry name" value="Aminopeptidase_M17"/>
    <property type="match status" value="1"/>
</dbReference>
<dbReference type="InterPro" id="IPR011356">
    <property type="entry name" value="Leucine_aapep/pepB"/>
</dbReference>
<dbReference type="InterPro" id="IPR047620">
    <property type="entry name" value="M17_PepB-like_N"/>
</dbReference>
<dbReference type="InterPro" id="IPR008330">
    <property type="entry name" value="Pept_M17_PepB"/>
</dbReference>
<dbReference type="InterPro" id="IPR000819">
    <property type="entry name" value="Peptidase_M17_C"/>
</dbReference>
<dbReference type="NCBIfam" id="NF003450">
    <property type="entry name" value="PRK05015.1"/>
    <property type="match status" value="1"/>
</dbReference>
<dbReference type="PANTHER" id="PTHR11963">
    <property type="entry name" value="LEUCINE AMINOPEPTIDASE-RELATED"/>
    <property type="match status" value="1"/>
</dbReference>
<dbReference type="PANTHER" id="PTHR11963:SF20">
    <property type="entry name" value="PEPTIDASE B"/>
    <property type="match status" value="1"/>
</dbReference>
<dbReference type="Pfam" id="PF12404">
    <property type="entry name" value="DUF3663"/>
    <property type="match status" value="1"/>
</dbReference>
<dbReference type="Pfam" id="PF00883">
    <property type="entry name" value="Peptidase_M17"/>
    <property type="match status" value="1"/>
</dbReference>
<dbReference type="PIRSF" id="PIRSF036388">
    <property type="entry name" value="Ctsl_amnpptdse_B"/>
    <property type="match status" value="1"/>
</dbReference>
<dbReference type="PRINTS" id="PR00481">
    <property type="entry name" value="LAMNOPPTDASE"/>
</dbReference>
<dbReference type="SUPFAM" id="SSF53187">
    <property type="entry name" value="Zn-dependent exopeptidases"/>
    <property type="match status" value="1"/>
</dbReference>
<dbReference type="PROSITE" id="PS00631">
    <property type="entry name" value="CYTOSOL_AP"/>
    <property type="match status" value="1"/>
</dbReference>
<feature type="chain" id="PRO_0000165841" description="Peptidase B">
    <location>
        <begin position="1"/>
        <end position="427"/>
    </location>
</feature>
<feature type="active site" evidence="1">
    <location>
        <position position="207"/>
    </location>
</feature>
<feature type="active site" evidence="1">
    <location>
        <position position="281"/>
    </location>
</feature>
<feature type="binding site" evidence="1">
    <location>
        <position position="195"/>
    </location>
    <ligand>
        <name>Mn(2+)</name>
        <dbReference type="ChEBI" id="CHEBI:29035"/>
        <label>2</label>
    </ligand>
</feature>
<feature type="binding site" evidence="1">
    <location>
        <position position="200"/>
    </location>
    <ligand>
        <name>Mn(2+)</name>
        <dbReference type="ChEBI" id="CHEBI:29035"/>
        <label>1</label>
    </ligand>
</feature>
<feature type="binding site" evidence="1">
    <location>
        <position position="200"/>
    </location>
    <ligand>
        <name>Mn(2+)</name>
        <dbReference type="ChEBI" id="CHEBI:29035"/>
        <label>2</label>
    </ligand>
</feature>
<feature type="binding site" evidence="1">
    <location>
        <position position="218"/>
    </location>
    <ligand>
        <name>Mn(2+)</name>
        <dbReference type="ChEBI" id="CHEBI:29035"/>
        <label>2</label>
    </ligand>
</feature>
<feature type="binding site" evidence="1">
    <location>
        <position position="277"/>
    </location>
    <ligand>
        <name>Mn(2+)</name>
        <dbReference type="ChEBI" id="CHEBI:29035"/>
        <label>1</label>
    </ligand>
</feature>
<feature type="binding site" evidence="1">
    <location>
        <position position="279"/>
    </location>
    <ligand>
        <name>Mn(2+)</name>
        <dbReference type="ChEBI" id="CHEBI:29035"/>
        <label>1</label>
    </ligand>
</feature>
<feature type="binding site" evidence="1">
    <location>
        <position position="279"/>
    </location>
    <ligand>
        <name>Mn(2+)</name>
        <dbReference type="ChEBI" id="CHEBI:29035"/>
        <label>2</label>
    </ligand>
</feature>
<gene>
    <name evidence="1" type="primary">pepB</name>
    <name type="ordered locus">STY2782</name>
    <name type="ordered locus">t0320</name>
</gene>
<accession>Q8Z4N3</accession>
<proteinExistence type="inferred from homology"/>
<sequence length="427" mass="46413">MTEAMKITLSTQPADARWGDKATYSINNDGITLHLNGKDDLGLIQRAARKIDGLGIKQVALTGEGWDTERCWAFWAGYKGPKGVRTVMWPDLDDAQRQELDNRLTIIDWVRDTINAPAEELGPEQLAQRAVDLLCSVACDSVTYRITKGEDLREQNYMGLHTVGRGSERPPVLLALDYNPTGDKDAPVYACLVGKGITFDSGGYSIKQSAFMDSMKSDMGGAATVTGALAFAITRGLNKRVKLFLCCADNLISGNAFKLGDIIRYRNGKNVEVMNTDAEGRLVLADGLIDASAQHPRLIIDMATLTGAAKTALGNDYHALFSFDDTLAGRLLTSAAQENEPFWRLPLAEFHRNQLPSNFAELNNTGSATYPAGASTAAGFLSHFVENYREGWLHIDCSATYRKAPVEQWAAGATGLGVRTIANLLTA</sequence>
<reference key="1">
    <citation type="journal article" date="2001" name="Nature">
        <title>Complete genome sequence of a multiple drug resistant Salmonella enterica serovar Typhi CT18.</title>
        <authorList>
            <person name="Parkhill J."/>
            <person name="Dougan G."/>
            <person name="James K.D."/>
            <person name="Thomson N.R."/>
            <person name="Pickard D."/>
            <person name="Wain J."/>
            <person name="Churcher C.M."/>
            <person name="Mungall K.L."/>
            <person name="Bentley S.D."/>
            <person name="Holden M.T.G."/>
            <person name="Sebaihia M."/>
            <person name="Baker S."/>
            <person name="Basham D."/>
            <person name="Brooks K."/>
            <person name="Chillingworth T."/>
            <person name="Connerton P."/>
            <person name="Cronin A."/>
            <person name="Davis P."/>
            <person name="Davies R.M."/>
            <person name="Dowd L."/>
            <person name="White N."/>
            <person name="Farrar J."/>
            <person name="Feltwell T."/>
            <person name="Hamlin N."/>
            <person name="Haque A."/>
            <person name="Hien T.T."/>
            <person name="Holroyd S."/>
            <person name="Jagels K."/>
            <person name="Krogh A."/>
            <person name="Larsen T.S."/>
            <person name="Leather S."/>
            <person name="Moule S."/>
            <person name="O'Gaora P."/>
            <person name="Parry C."/>
            <person name="Quail M.A."/>
            <person name="Rutherford K.M."/>
            <person name="Simmonds M."/>
            <person name="Skelton J."/>
            <person name="Stevens K."/>
            <person name="Whitehead S."/>
            <person name="Barrell B.G."/>
        </authorList>
    </citation>
    <scope>NUCLEOTIDE SEQUENCE [LARGE SCALE GENOMIC DNA]</scope>
    <source>
        <strain>CT18</strain>
    </source>
</reference>
<reference key="2">
    <citation type="journal article" date="2003" name="J. Bacteriol.">
        <title>Comparative genomics of Salmonella enterica serovar Typhi strains Ty2 and CT18.</title>
        <authorList>
            <person name="Deng W."/>
            <person name="Liou S.-R."/>
            <person name="Plunkett G. III"/>
            <person name="Mayhew G.F."/>
            <person name="Rose D.J."/>
            <person name="Burland V."/>
            <person name="Kodoyianni V."/>
            <person name="Schwartz D.C."/>
            <person name="Blattner F.R."/>
        </authorList>
    </citation>
    <scope>NUCLEOTIDE SEQUENCE [LARGE SCALE GENOMIC DNA]</scope>
    <source>
        <strain>ATCC 700931 / Ty2</strain>
    </source>
</reference>
<protein>
    <recommendedName>
        <fullName evidence="1">Peptidase B</fullName>
        <ecNumber evidence="1">3.4.11.23</ecNumber>
    </recommendedName>
    <alternativeName>
        <fullName evidence="1">Aminopeptidase B</fullName>
    </alternativeName>
</protein>